<name>HIS4_PROA2</name>
<accession>B4S4Z8</accession>
<reference key="1">
    <citation type="submission" date="2008-06" db="EMBL/GenBank/DDBJ databases">
        <title>Complete sequence of chromosome of Prosthecochloris aestuarii DSM 271.</title>
        <authorList>
            <consortium name="US DOE Joint Genome Institute"/>
            <person name="Lucas S."/>
            <person name="Copeland A."/>
            <person name="Lapidus A."/>
            <person name="Glavina del Rio T."/>
            <person name="Dalin E."/>
            <person name="Tice H."/>
            <person name="Bruce D."/>
            <person name="Goodwin L."/>
            <person name="Pitluck S."/>
            <person name="Schmutz J."/>
            <person name="Larimer F."/>
            <person name="Land M."/>
            <person name="Hauser L."/>
            <person name="Kyrpides N."/>
            <person name="Anderson I."/>
            <person name="Liu Z."/>
            <person name="Li T."/>
            <person name="Zhao F."/>
            <person name="Overmann J."/>
            <person name="Bryant D.A."/>
            <person name="Richardson P."/>
        </authorList>
    </citation>
    <scope>NUCLEOTIDE SEQUENCE [LARGE SCALE GENOMIC DNA]</scope>
    <source>
        <strain>DSM 271 / SK 413</strain>
    </source>
</reference>
<sequence length="261" mass="28884">MLIIPAIDIKDGKCVRLTRGDFDQQKIYLDNPRDMAIIWRKQNAKMLHVVDLDAALTGTMVNFEKIREIVATLDIPVQVGGGIRSFEDVERYLGIGVSRVVIGSAAVTNPQLIAELLATFSPSQIVVGIDAENGIPKIKGWTESSSMQDYELALEMKKLGVKRIIYTDISRDGMMQGVGYESTRRFAMKAGMRVTASGGVTSSDDLKKLQTLEQYGVDSVIVGKALYESNFPCQQLWYNYEKGMGIDCNFTTASVRGKCCF</sequence>
<gene>
    <name evidence="1" type="primary">hisA</name>
    <name type="ordered locus">Paes_0439</name>
</gene>
<evidence type="ECO:0000255" key="1">
    <source>
        <dbReference type="HAMAP-Rule" id="MF_01014"/>
    </source>
</evidence>
<keyword id="KW-0028">Amino-acid biosynthesis</keyword>
<keyword id="KW-0963">Cytoplasm</keyword>
<keyword id="KW-0368">Histidine biosynthesis</keyword>
<keyword id="KW-0413">Isomerase</keyword>
<organism>
    <name type="scientific">Prosthecochloris aestuarii (strain DSM 271 / SK 413)</name>
    <dbReference type="NCBI Taxonomy" id="290512"/>
    <lineage>
        <taxon>Bacteria</taxon>
        <taxon>Pseudomonadati</taxon>
        <taxon>Chlorobiota</taxon>
        <taxon>Chlorobiia</taxon>
        <taxon>Chlorobiales</taxon>
        <taxon>Chlorobiaceae</taxon>
        <taxon>Prosthecochloris</taxon>
    </lineage>
</organism>
<dbReference type="EC" id="5.3.1.16" evidence="1"/>
<dbReference type="EMBL" id="CP001108">
    <property type="protein sequence ID" value="ACF45496.1"/>
    <property type="molecule type" value="Genomic_DNA"/>
</dbReference>
<dbReference type="RefSeq" id="WP_012505033.1">
    <property type="nucleotide sequence ID" value="NC_011059.1"/>
</dbReference>
<dbReference type="SMR" id="B4S4Z8"/>
<dbReference type="STRING" id="290512.Paes_0439"/>
<dbReference type="KEGG" id="paa:Paes_0439"/>
<dbReference type="eggNOG" id="COG0106">
    <property type="taxonomic scope" value="Bacteria"/>
</dbReference>
<dbReference type="HOGENOM" id="CLU_048577_1_1_10"/>
<dbReference type="UniPathway" id="UPA00031">
    <property type="reaction ID" value="UER00009"/>
</dbReference>
<dbReference type="Proteomes" id="UP000002725">
    <property type="component" value="Chromosome"/>
</dbReference>
<dbReference type="GO" id="GO:0005737">
    <property type="term" value="C:cytoplasm"/>
    <property type="evidence" value="ECO:0007669"/>
    <property type="project" value="UniProtKB-SubCell"/>
</dbReference>
<dbReference type="GO" id="GO:0003949">
    <property type="term" value="F:1-(5-phosphoribosyl)-5-[(5-phosphoribosylamino)methylideneamino]imidazole-4-carboxamide isomerase activity"/>
    <property type="evidence" value="ECO:0007669"/>
    <property type="project" value="UniProtKB-UniRule"/>
</dbReference>
<dbReference type="GO" id="GO:0000105">
    <property type="term" value="P:L-histidine biosynthetic process"/>
    <property type="evidence" value="ECO:0007669"/>
    <property type="project" value="UniProtKB-UniRule"/>
</dbReference>
<dbReference type="GO" id="GO:0000162">
    <property type="term" value="P:L-tryptophan biosynthetic process"/>
    <property type="evidence" value="ECO:0007669"/>
    <property type="project" value="TreeGrafter"/>
</dbReference>
<dbReference type="CDD" id="cd04732">
    <property type="entry name" value="HisA"/>
    <property type="match status" value="1"/>
</dbReference>
<dbReference type="FunFam" id="3.20.20.70:FF:000009">
    <property type="entry name" value="1-(5-phosphoribosyl)-5-[(5-phosphoribosylamino)methylideneamino] imidazole-4-carboxamide isomerase"/>
    <property type="match status" value="1"/>
</dbReference>
<dbReference type="Gene3D" id="3.20.20.70">
    <property type="entry name" value="Aldolase class I"/>
    <property type="match status" value="1"/>
</dbReference>
<dbReference type="HAMAP" id="MF_01014">
    <property type="entry name" value="HisA"/>
    <property type="match status" value="1"/>
</dbReference>
<dbReference type="InterPro" id="IPR013785">
    <property type="entry name" value="Aldolase_TIM"/>
</dbReference>
<dbReference type="InterPro" id="IPR006062">
    <property type="entry name" value="His_biosynth"/>
</dbReference>
<dbReference type="InterPro" id="IPR006063">
    <property type="entry name" value="HisA_bact_arch"/>
</dbReference>
<dbReference type="InterPro" id="IPR044524">
    <property type="entry name" value="Isoase_HisA-like"/>
</dbReference>
<dbReference type="InterPro" id="IPR023016">
    <property type="entry name" value="Isoase_HisA-like_bact"/>
</dbReference>
<dbReference type="InterPro" id="IPR011060">
    <property type="entry name" value="RibuloseP-bd_barrel"/>
</dbReference>
<dbReference type="NCBIfam" id="TIGR00007">
    <property type="entry name" value="1-(5-phosphoribosyl)-5-[(5-phosphoribosylamino)methylideneamino]imidazole-4-carboxamide isomerase"/>
    <property type="match status" value="1"/>
</dbReference>
<dbReference type="PANTHER" id="PTHR43090">
    <property type="entry name" value="1-(5-PHOSPHORIBOSYL)-5-[(5-PHOSPHORIBOSYLAMINO)METHYLIDENEAMINO] IMIDAZOLE-4-CARBOXAMIDE ISOMERASE"/>
    <property type="match status" value="1"/>
</dbReference>
<dbReference type="PANTHER" id="PTHR43090:SF2">
    <property type="entry name" value="1-(5-PHOSPHORIBOSYL)-5-[(5-PHOSPHORIBOSYLAMINO)METHYLIDENEAMINO] IMIDAZOLE-4-CARBOXAMIDE ISOMERASE"/>
    <property type="match status" value="1"/>
</dbReference>
<dbReference type="Pfam" id="PF00977">
    <property type="entry name" value="His_biosynth"/>
    <property type="match status" value="1"/>
</dbReference>
<dbReference type="SUPFAM" id="SSF51366">
    <property type="entry name" value="Ribulose-phoshate binding barrel"/>
    <property type="match status" value="1"/>
</dbReference>
<proteinExistence type="inferred from homology"/>
<feature type="chain" id="PRO_1000135138" description="1-(5-phosphoribosyl)-5-[(5-phosphoribosylamino)methylideneamino] imidazole-4-carboxamide isomerase">
    <location>
        <begin position="1"/>
        <end position="261"/>
    </location>
</feature>
<feature type="active site" description="Proton acceptor" evidence="1">
    <location>
        <position position="8"/>
    </location>
</feature>
<feature type="active site" description="Proton donor" evidence="1">
    <location>
        <position position="130"/>
    </location>
</feature>
<protein>
    <recommendedName>
        <fullName evidence="1">1-(5-phosphoribosyl)-5-[(5-phosphoribosylamino)methylideneamino] imidazole-4-carboxamide isomerase</fullName>
        <ecNumber evidence="1">5.3.1.16</ecNumber>
    </recommendedName>
    <alternativeName>
        <fullName evidence="1">Phosphoribosylformimino-5-aminoimidazole carboxamide ribotide isomerase</fullName>
    </alternativeName>
</protein>
<comment type="catalytic activity">
    <reaction evidence="1">
        <text>1-(5-phospho-beta-D-ribosyl)-5-[(5-phospho-beta-D-ribosylamino)methylideneamino]imidazole-4-carboxamide = 5-[(5-phospho-1-deoxy-D-ribulos-1-ylimino)methylamino]-1-(5-phospho-beta-D-ribosyl)imidazole-4-carboxamide</text>
        <dbReference type="Rhea" id="RHEA:15469"/>
        <dbReference type="ChEBI" id="CHEBI:58435"/>
        <dbReference type="ChEBI" id="CHEBI:58525"/>
        <dbReference type="EC" id="5.3.1.16"/>
    </reaction>
</comment>
<comment type="pathway">
    <text evidence="1">Amino-acid biosynthesis; L-histidine biosynthesis; L-histidine from 5-phospho-alpha-D-ribose 1-diphosphate: step 4/9.</text>
</comment>
<comment type="subcellular location">
    <subcellularLocation>
        <location evidence="1">Cytoplasm</location>
    </subcellularLocation>
</comment>
<comment type="similarity">
    <text evidence="1">Belongs to the HisA/HisF family.</text>
</comment>